<protein>
    <recommendedName>
        <fullName evidence="1">Methionine--tRNA ligase</fullName>
        <ecNumber evidence="1">6.1.1.10</ecNumber>
    </recommendedName>
    <alternativeName>
        <fullName evidence="1">Methionyl-tRNA synthetase</fullName>
        <shortName evidence="1">MetRS</shortName>
    </alternativeName>
</protein>
<accession>Q6MDG0</accession>
<comment type="function">
    <text evidence="1">Is required not only for elongation of protein synthesis but also for the initiation of all mRNA translation through initiator tRNA(fMet) aminoacylation.</text>
</comment>
<comment type="catalytic activity">
    <reaction evidence="1">
        <text>tRNA(Met) + L-methionine + ATP = L-methionyl-tRNA(Met) + AMP + diphosphate</text>
        <dbReference type="Rhea" id="RHEA:13481"/>
        <dbReference type="Rhea" id="RHEA-COMP:9667"/>
        <dbReference type="Rhea" id="RHEA-COMP:9698"/>
        <dbReference type="ChEBI" id="CHEBI:30616"/>
        <dbReference type="ChEBI" id="CHEBI:33019"/>
        <dbReference type="ChEBI" id="CHEBI:57844"/>
        <dbReference type="ChEBI" id="CHEBI:78442"/>
        <dbReference type="ChEBI" id="CHEBI:78530"/>
        <dbReference type="ChEBI" id="CHEBI:456215"/>
        <dbReference type="EC" id="6.1.1.10"/>
    </reaction>
</comment>
<comment type="cofactor">
    <cofactor evidence="1">
        <name>Zn(2+)</name>
        <dbReference type="ChEBI" id="CHEBI:29105"/>
    </cofactor>
    <text evidence="1">Binds 1 zinc ion per subunit.</text>
</comment>
<comment type="subunit">
    <text evidence="1">Homodimer.</text>
</comment>
<comment type="subcellular location">
    <subcellularLocation>
        <location evidence="1">Cytoplasm</location>
    </subcellularLocation>
</comment>
<comment type="similarity">
    <text evidence="1">Belongs to the class-I aminoacyl-tRNA synthetase family. MetG type 1 subfamily.</text>
</comment>
<feature type="chain" id="PRO_0000139148" description="Methionine--tRNA ligase">
    <location>
        <begin position="1"/>
        <end position="698"/>
    </location>
</feature>
<feature type="domain" description="tRNA-binding" evidence="1">
    <location>
        <begin position="599"/>
        <end position="698"/>
    </location>
</feature>
<feature type="short sequence motif" description="'HIGH' region">
    <location>
        <begin position="21"/>
        <end position="31"/>
    </location>
</feature>
<feature type="short sequence motif" description="'KMSKS' region">
    <location>
        <begin position="341"/>
        <end position="345"/>
    </location>
</feature>
<feature type="binding site" evidence="1">
    <location>
        <position position="153"/>
    </location>
    <ligand>
        <name>Zn(2+)</name>
        <dbReference type="ChEBI" id="CHEBI:29105"/>
    </ligand>
</feature>
<feature type="binding site" evidence="1">
    <location>
        <position position="156"/>
    </location>
    <ligand>
        <name>Zn(2+)</name>
        <dbReference type="ChEBI" id="CHEBI:29105"/>
    </ligand>
</feature>
<feature type="binding site" evidence="1">
    <location>
        <position position="166"/>
    </location>
    <ligand>
        <name>Zn(2+)</name>
        <dbReference type="ChEBI" id="CHEBI:29105"/>
    </ligand>
</feature>
<feature type="binding site" evidence="1">
    <location>
        <position position="169"/>
    </location>
    <ligand>
        <name>Zn(2+)</name>
        <dbReference type="ChEBI" id="CHEBI:29105"/>
    </ligand>
</feature>
<feature type="binding site" evidence="1">
    <location>
        <position position="344"/>
    </location>
    <ligand>
        <name>ATP</name>
        <dbReference type="ChEBI" id="CHEBI:30616"/>
    </ligand>
</feature>
<reference key="1">
    <citation type="journal article" date="2004" name="Science">
        <title>Illuminating the evolutionary history of chlamydiae.</title>
        <authorList>
            <person name="Horn M."/>
            <person name="Collingro A."/>
            <person name="Schmitz-Esser S."/>
            <person name="Beier C.L."/>
            <person name="Purkhold U."/>
            <person name="Fartmann B."/>
            <person name="Brandt P."/>
            <person name="Nyakatura G.J."/>
            <person name="Droege M."/>
            <person name="Frishman D."/>
            <person name="Rattei T."/>
            <person name="Mewes H.-W."/>
            <person name="Wagner M."/>
        </authorList>
    </citation>
    <scope>NUCLEOTIDE SEQUENCE [LARGE SCALE GENOMIC DNA]</scope>
    <source>
        <strain>UWE25</strain>
    </source>
</reference>
<organism>
    <name type="scientific">Protochlamydia amoebophila (strain UWE25)</name>
    <dbReference type="NCBI Taxonomy" id="264201"/>
    <lineage>
        <taxon>Bacteria</taxon>
        <taxon>Pseudomonadati</taxon>
        <taxon>Chlamydiota</taxon>
        <taxon>Chlamydiia</taxon>
        <taxon>Parachlamydiales</taxon>
        <taxon>Parachlamydiaceae</taxon>
        <taxon>Candidatus Protochlamydia</taxon>
    </lineage>
</organism>
<dbReference type="EC" id="6.1.1.10" evidence="1"/>
<dbReference type="EMBL" id="BX908798">
    <property type="protein sequence ID" value="CAF23389.1"/>
    <property type="molecule type" value="Genomic_DNA"/>
</dbReference>
<dbReference type="SMR" id="Q6MDG0"/>
<dbReference type="STRING" id="264201.pc0665"/>
<dbReference type="eggNOG" id="COG0073">
    <property type="taxonomic scope" value="Bacteria"/>
</dbReference>
<dbReference type="eggNOG" id="COG0143">
    <property type="taxonomic scope" value="Bacteria"/>
</dbReference>
<dbReference type="HOGENOM" id="CLU_009710_1_2_0"/>
<dbReference type="Proteomes" id="UP000000529">
    <property type="component" value="Chromosome"/>
</dbReference>
<dbReference type="GO" id="GO:0005829">
    <property type="term" value="C:cytosol"/>
    <property type="evidence" value="ECO:0007669"/>
    <property type="project" value="TreeGrafter"/>
</dbReference>
<dbReference type="GO" id="GO:0005524">
    <property type="term" value="F:ATP binding"/>
    <property type="evidence" value="ECO:0007669"/>
    <property type="project" value="UniProtKB-UniRule"/>
</dbReference>
<dbReference type="GO" id="GO:0046872">
    <property type="term" value="F:metal ion binding"/>
    <property type="evidence" value="ECO:0007669"/>
    <property type="project" value="UniProtKB-KW"/>
</dbReference>
<dbReference type="GO" id="GO:0004825">
    <property type="term" value="F:methionine-tRNA ligase activity"/>
    <property type="evidence" value="ECO:0007669"/>
    <property type="project" value="UniProtKB-UniRule"/>
</dbReference>
<dbReference type="GO" id="GO:0000049">
    <property type="term" value="F:tRNA binding"/>
    <property type="evidence" value="ECO:0007669"/>
    <property type="project" value="UniProtKB-KW"/>
</dbReference>
<dbReference type="GO" id="GO:0006431">
    <property type="term" value="P:methionyl-tRNA aminoacylation"/>
    <property type="evidence" value="ECO:0007669"/>
    <property type="project" value="UniProtKB-UniRule"/>
</dbReference>
<dbReference type="CDD" id="cd07957">
    <property type="entry name" value="Anticodon_Ia_Met"/>
    <property type="match status" value="1"/>
</dbReference>
<dbReference type="CDD" id="cd00814">
    <property type="entry name" value="MetRS_core"/>
    <property type="match status" value="1"/>
</dbReference>
<dbReference type="CDD" id="cd02800">
    <property type="entry name" value="tRNA_bind_EcMetRS_like"/>
    <property type="match status" value="1"/>
</dbReference>
<dbReference type="FunFam" id="2.20.28.20:FF:000001">
    <property type="entry name" value="Methionine--tRNA ligase"/>
    <property type="match status" value="1"/>
</dbReference>
<dbReference type="FunFam" id="2.40.50.140:FF:000042">
    <property type="entry name" value="Methionine--tRNA ligase"/>
    <property type="match status" value="1"/>
</dbReference>
<dbReference type="Gene3D" id="3.40.50.620">
    <property type="entry name" value="HUPs"/>
    <property type="match status" value="1"/>
</dbReference>
<dbReference type="Gene3D" id="1.10.730.10">
    <property type="entry name" value="Isoleucyl-tRNA Synthetase, Domain 1"/>
    <property type="match status" value="1"/>
</dbReference>
<dbReference type="Gene3D" id="2.20.28.20">
    <property type="entry name" value="Methionyl-tRNA synthetase, Zn-domain"/>
    <property type="match status" value="1"/>
</dbReference>
<dbReference type="Gene3D" id="2.40.50.140">
    <property type="entry name" value="Nucleic acid-binding proteins"/>
    <property type="match status" value="1"/>
</dbReference>
<dbReference type="HAMAP" id="MF_00098">
    <property type="entry name" value="Met_tRNA_synth_type1"/>
    <property type="match status" value="1"/>
</dbReference>
<dbReference type="InterPro" id="IPR041872">
    <property type="entry name" value="Anticodon_Met"/>
</dbReference>
<dbReference type="InterPro" id="IPR004495">
    <property type="entry name" value="Met-tRNA-synth_bsu_C"/>
</dbReference>
<dbReference type="InterPro" id="IPR023458">
    <property type="entry name" value="Met-tRNA_ligase_1"/>
</dbReference>
<dbReference type="InterPro" id="IPR014758">
    <property type="entry name" value="Met-tRNA_synth"/>
</dbReference>
<dbReference type="InterPro" id="IPR015413">
    <property type="entry name" value="Methionyl/Leucyl_tRNA_Synth"/>
</dbReference>
<dbReference type="InterPro" id="IPR033911">
    <property type="entry name" value="MetRS_core"/>
</dbReference>
<dbReference type="InterPro" id="IPR029038">
    <property type="entry name" value="MetRS_Zn"/>
</dbReference>
<dbReference type="InterPro" id="IPR012340">
    <property type="entry name" value="NA-bd_OB-fold"/>
</dbReference>
<dbReference type="InterPro" id="IPR014729">
    <property type="entry name" value="Rossmann-like_a/b/a_fold"/>
</dbReference>
<dbReference type="InterPro" id="IPR002547">
    <property type="entry name" value="tRNA-bd_dom"/>
</dbReference>
<dbReference type="InterPro" id="IPR009080">
    <property type="entry name" value="tRNAsynth_Ia_anticodon-bd"/>
</dbReference>
<dbReference type="NCBIfam" id="TIGR00398">
    <property type="entry name" value="metG"/>
    <property type="match status" value="1"/>
</dbReference>
<dbReference type="NCBIfam" id="TIGR00399">
    <property type="entry name" value="metG_C_term"/>
    <property type="match status" value="1"/>
</dbReference>
<dbReference type="NCBIfam" id="NF001100">
    <property type="entry name" value="PRK00133.1"/>
    <property type="match status" value="1"/>
</dbReference>
<dbReference type="PANTHER" id="PTHR45765">
    <property type="entry name" value="METHIONINE--TRNA LIGASE"/>
    <property type="match status" value="1"/>
</dbReference>
<dbReference type="PANTHER" id="PTHR45765:SF1">
    <property type="entry name" value="METHIONINE--TRNA LIGASE, CYTOPLASMIC"/>
    <property type="match status" value="1"/>
</dbReference>
<dbReference type="Pfam" id="PF19303">
    <property type="entry name" value="Anticodon_3"/>
    <property type="match status" value="1"/>
</dbReference>
<dbReference type="Pfam" id="PF09334">
    <property type="entry name" value="tRNA-synt_1g"/>
    <property type="match status" value="1"/>
</dbReference>
<dbReference type="Pfam" id="PF01588">
    <property type="entry name" value="tRNA_bind"/>
    <property type="match status" value="1"/>
</dbReference>
<dbReference type="PRINTS" id="PR01041">
    <property type="entry name" value="TRNASYNTHMET"/>
</dbReference>
<dbReference type="SUPFAM" id="SSF47323">
    <property type="entry name" value="Anticodon-binding domain of a subclass of class I aminoacyl-tRNA synthetases"/>
    <property type="match status" value="1"/>
</dbReference>
<dbReference type="SUPFAM" id="SSF57770">
    <property type="entry name" value="Methionyl-tRNA synthetase (MetRS), Zn-domain"/>
    <property type="match status" value="1"/>
</dbReference>
<dbReference type="SUPFAM" id="SSF50249">
    <property type="entry name" value="Nucleic acid-binding proteins"/>
    <property type="match status" value="1"/>
</dbReference>
<dbReference type="SUPFAM" id="SSF52374">
    <property type="entry name" value="Nucleotidylyl transferase"/>
    <property type="match status" value="1"/>
</dbReference>
<dbReference type="PROSITE" id="PS50886">
    <property type="entry name" value="TRBD"/>
    <property type="match status" value="1"/>
</dbReference>
<proteinExistence type="inferred from homology"/>
<evidence type="ECO:0000255" key="1">
    <source>
        <dbReference type="HAMAP-Rule" id="MF_00098"/>
    </source>
</evidence>
<keyword id="KW-0030">Aminoacyl-tRNA synthetase</keyword>
<keyword id="KW-0067">ATP-binding</keyword>
<keyword id="KW-0963">Cytoplasm</keyword>
<keyword id="KW-0436">Ligase</keyword>
<keyword id="KW-0479">Metal-binding</keyword>
<keyword id="KW-0547">Nucleotide-binding</keyword>
<keyword id="KW-0648">Protein biosynthesis</keyword>
<keyword id="KW-1185">Reference proteome</keyword>
<keyword id="KW-0694">RNA-binding</keyword>
<keyword id="KW-0820">tRNA-binding</keyword>
<keyword id="KW-0862">Zinc</keyword>
<name>SYM_PARUW</name>
<gene>
    <name evidence="1" type="primary">metG</name>
    <name type="ordered locus">pc0665</name>
</gene>
<sequence length="698" mass="79928">MFKNLCDKIMTQKILITSALPYANGPLHFGHIAGAYLPADCYARFQRLMKKDVLYICGSDEYGIAITLSADLAGRTPQEHVDLFHHINQSFFEQLQISFDHYSRTTWKGHVEPTHQFFNDLLQNGYIEERTTDQLYSEKDQKFLADRYVVGTCPRCGFENARGDECPCCGASYEATELKNPRSKLTDASLILRPTKHWFLLLEKFKKPLMEWLETKNWKPNVINFIRGYIDHLHARAITRDMKWGISVPLPDSEGKVLYVWFDAPIGYISATKEWALLRGEEKLWEKYWLDPETKLVNFIGKDNIPFHASIFPAMIMGQNQPYKLVDELPANEFYNLEGKQFSKSDGWYIDLEDFFKHYTSDQIRYAIASNAPETSDSEFTWKDFQLRCNSDLLGKYGNLVNRVLVFIHNQCQGKVPESGVLEEQDRKFLKNIQDLVDQAAASYSTFKVRKASQIMMELSQLGNVYFDSKKPWQDAKNDYTKGRMHTTLNCCMECLKALALISFPIIPTAASKVWQFLGFQTPLEQEDWNRVKIEKLPLNQKILTPQILFQRVENEAVEREILKLQQLSLTKEKKSTPQSTQISISENILLKPLVDIEDFRKLDLRVGKIIQANPVPKSKKLFQLLVDIGIEKRIVVAGVAEFYKVEDLIGKNVVVVANLKPANLMGVTSQGMLLAAKGEGNLKLISIEDVAPGSLVS</sequence>